<dbReference type="EMBL" id="FO080290">
    <property type="protein sequence ID" value="CCD62653.1"/>
    <property type="molecule type" value="Genomic_DNA"/>
</dbReference>
<dbReference type="PIR" id="S44777">
    <property type="entry name" value="S44777"/>
</dbReference>
<dbReference type="RefSeq" id="NP_498797.1">
    <property type="nucleotide sequence ID" value="NM_066396.1"/>
</dbReference>
<dbReference type="SMR" id="P34350"/>
<dbReference type="FunCoup" id="P34350">
    <property type="interactions" value="178"/>
</dbReference>
<dbReference type="STRING" id="6239.C30A5.4.1"/>
<dbReference type="PaxDb" id="6239-C30A5.4"/>
<dbReference type="UCSC" id="C30A5.4">
    <property type="organism name" value="c. elegans"/>
</dbReference>
<dbReference type="WormBase" id="C30A5.4">
    <property type="protein sequence ID" value="CE00095"/>
    <property type="gene ID" value="WBGene00016239"/>
</dbReference>
<dbReference type="eggNOG" id="KOG0374">
    <property type="taxonomic scope" value="Eukaryota"/>
</dbReference>
<dbReference type="HOGENOM" id="CLU_004962_0_4_1"/>
<dbReference type="InParanoid" id="P34350"/>
<dbReference type="OMA" id="MHYTKEE"/>
<dbReference type="PhylomeDB" id="P34350"/>
<dbReference type="PRO" id="PR:P34350"/>
<dbReference type="Proteomes" id="UP000001940">
    <property type="component" value="Chromosome III"/>
</dbReference>
<dbReference type="Bgee" id="WBGene00016239">
    <property type="expression patterns" value="Expressed in material anatomical entity and 2 other cell types or tissues"/>
</dbReference>
<dbReference type="GO" id="GO:0005737">
    <property type="term" value="C:cytoplasm"/>
    <property type="evidence" value="ECO:0000318"/>
    <property type="project" value="GO_Central"/>
</dbReference>
<dbReference type="GO" id="GO:0005634">
    <property type="term" value="C:nucleus"/>
    <property type="evidence" value="ECO:0000318"/>
    <property type="project" value="GO_Central"/>
</dbReference>
<dbReference type="GO" id="GO:0004722">
    <property type="term" value="F:protein serine/threonine phosphatase activity"/>
    <property type="evidence" value="ECO:0000318"/>
    <property type="project" value="GO_Central"/>
</dbReference>
<dbReference type="CDD" id="cd00144">
    <property type="entry name" value="MPP_PPP_family"/>
    <property type="match status" value="1"/>
</dbReference>
<dbReference type="FunFam" id="3.60.21.10:FF:000351">
    <property type="entry name" value="Protein CBG24260"/>
    <property type="match status" value="1"/>
</dbReference>
<dbReference type="FunFam" id="3.60.21.10:FF:000349">
    <property type="entry name" value="Uncharacterized protein C30A5.4"/>
    <property type="match status" value="1"/>
</dbReference>
<dbReference type="Gene3D" id="3.60.21.10">
    <property type="match status" value="2"/>
</dbReference>
<dbReference type="InterPro" id="IPR004843">
    <property type="entry name" value="Calcineurin-like_PHP_ApaH"/>
</dbReference>
<dbReference type="InterPro" id="IPR029052">
    <property type="entry name" value="Metallo-depent_PP-like"/>
</dbReference>
<dbReference type="InterPro" id="IPR050341">
    <property type="entry name" value="PP1_catalytic_subunit"/>
</dbReference>
<dbReference type="InterPro" id="IPR006186">
    <property type="entry name" value="Ser/Thr-sp_prot-phosphatase"/>
</dbReference>
<dbReference type="PANTHER" id="PTHR11668">
    <property type="entry name" value="SERINE/THREONINE PROTEIN PHOSPHATASE"/>
    <property type="match status" value="1"/>
</dbReference>
<dbReference type="PANTHER" id="PTHR11668:SF10">
    <property type="entry name" value="SERINE_THREONINE-PROTEIN PHOSPHATASE"/>
    <property type="match status" value="1"/>
</dbReference>
<dbReference type="Pfam" id="PF00149">
    <property type="entry name" value="Metallophos"/>
    <property type="match status" value="1"/>
</dbReference>
<dbReference type="PRINTS" id="PR00114">
    <property type="entry name" value="STPHPHTASE"/>
</dbReference>
<dbReference type="SMART" id="SM00156">
    <property type="entry name" value="PP2Ac"/>
    <property type="match status" value="1"/>
</dbReference>
<dbReference type="SUPFAM" id="SSF56300">
    <property type="entry name" value="Metallo-dependent phosphatases"/>
    <property type="match status" value="1"/>
</dbReference>
<reference key="1">
    <citation type="journal article" date="1994" name="Nature">
        <title>2.2 Mb of contiguous nucleotide sequence from chromosome III of C. elegans.</title>
        <authorList>
            <person name="Wilson R."/>
            <person name="Ainscough R."/>
            <person name="Anderson K."/>
            <person name="Baynes C."/>
            <person name="Berks M."/>
            <person name="Bonfield J."/>
            <person name="Burton J."/>
            <person name="Connell M."/>
            <person name="Copsey T."/>
            <person name="Cooper J."/>
            <person name="Coulson A."/>
            <person name="Craxton M."/>
            <person name="Dear S."/>
            <person name="Du Z."/>
            <person name="Durbin R."/>
            <person name="Favello A."/>
            <person name="Fraser A."/>
            <person name="Fulton L."/>
            <person name="Gardner A."/>
            <person name="Green P."/>
            <person name="Hawkins T."/>
            <person name="Hillier L."/>
            <person name="Jier M."/>
            <person name="Johnston L."/>
            <person name="Jones M."/>
            <person name="Kershaw J."/>
            <person name="Kirsten J."/>
            <person name="Laisster N."/>
            <person name="Latreille P."/>
            <person name="Lightning J."/>
            <person name="Lloyd C."/>
            <person name="Mortimore B."/>
            <person name="O'Callaghan M."/>
            <person name="Parsons J."/>
            <person name="Percy C."/>
            <person name="Rifken L."/>
            <person name="Roopra A."/>
            <person name="Saunders D."/>
            <person name="Shownkeen R."/>
            <person name="Sims M."/>
            <person name="Smaldon N."/>
            <person name="Smith A."/>
            <person name="Smith M."/>
            <person name="Sonnhammer E."/>
            <person name="Staden R."/>
            <person name="Sulston J."/>
            <person name="Thierry-Mieg J."/>
            <person name="Thomas K."/>
            <person name="Vaudin M."/>
            <person name="Vaughan K."/>
            <person name="Waterston R."/>
            <person name="Watson A."/>
            <person name="Weinstock L."/>
            <person name="Wilkinson-Sproat J."/>
            <person name="Wohldman P."/>
        </authorList>
    </citation>
    <scope>NUCLEOTIDE SEQUENCE [LARGE SCALE GENOMIC DNA]</scope>
    <source>
        <strain>Bristol N2</strain>
    </source>
</reference>
<reference key="2">
    <citation type="journal article" date="1998" name="Science">
        <title>Genome sequence of the nematode C. elegans: a platform for investigating biology.</title>
        <authorList>
            <consortium name="The C. elegans sequencing consortium"/>
        </authorList>
    </citation>
    <scope>NUCLEOTIDE SEQUENCE [LARGE SCALE GENOMIC DNA]</scope>
    <source>
        <strain>Bristol N2</strain>
    </source>
</reference>
<feature type="chain" id="PRO_0000065206" description="Uncharacterized protein C30A5.4">
    <location>
        <begin position="1"/>
        <end position="378"/>
    </location>
</feature>
<feature type="region of interest" description="Disordered" evidence="1">
    <location>
        <begin position="1"/>
        <end position="23"/>
    </location>
</feature>
<feature type="compositionally biased region" description="Basic residues" evidence="1">
    <location>
        <begin position="1"/>
        <end position="11"/>
    </location>
</feature>
<proteinExistence type="predicted"/>
<gene>
    <name type="ORF">C30A5.4</name>
</gene>
<organism>
    <name type="scientific">Caenorhabditis elegans</name>
    <dbReference type="NCBI Taxonomy" id="6239"/>
    <lineage>
        <taxon>Eukaryota</taxon>
        <taxon>Metazoa</taxon>
        <taxon>Ecdysozoa</taxon>
        <taxon>Nematoda</taxon>
        <taxon>Chromadorea</taxon>
        <taxon>Rhabditida</taxon>
        <taxon>Rhabditina</taxon>
        <taxon>Rhabditomorpha</taxon>
        <taxon>Rhabditoidea</taxon>
        <taxon>Rhabditidae</taxon>
        <taxon>Peloderinae</taxon>
        <taxon>Caenorhabditis</taxon>
    </lineage>
</organism>
<keyword id="KW-1185">Reference proteome</keyword>
<evidence type="ECO:0000256" key="1">
    <source>
        <dbReference type="SAM" id="MobiDB-lite"/>
    </source>
</evidence>
<accession>P34350</accession>
<protein>
    <recommendedName>
        <fullName>Uncharacterized protein C30A5.4</fullName>
    </recommendedName>
</protein>
<name>YK84_CAEEL</name>
<sequence length="378" mass="43031">MSPMNRQRKNKSNVLNEKDERPGCIIKEKSSVRSMAKTQPTSGRTISLSEINKPIALSKKNTEIKAAVEIQNRLTKKMAKNSERRKKMAHGPEMTAQNRTQERIDFVEFLDRHYQVMQAGVSTVKVHKMHYTKEEFENVIYEAQTIFSSEKALVDIDPPCVVVGNLHGQFNDLINMFILLGRPPETVYVFTECVTSIPKCGEEIWALFQRCFNNLPISALIATKILCMHGGLSPALTCLDELRNHPKPIRNPFRGIVNDMLWADPDPSVFEWKTSSRGSGFTFGTNVIDDVCKRLGVELIIRAHQMCFDGYWVLSGRKLITIFSAPMYCNFYKNTGCVLKVDETLGIQTVAFVPESENIEKIIEEMNRVWDISIDCIE</sequence>